<feature type="chain" id="PRO_0000266683" description="Small ribosomal subunit protein bS21A">
    <location>
        <begin position="1"/>
        <end position="59"/>
    </location>
</feature>
<accession>Q7NHK6</accession>
<dbReference type="EMBL" id="BA000045">
    <property type="protein sequence ID" value="BAC90470.1"/>
    <property type="molecule type" value="Genomic_DNA"/>
</dbReference>
<dbReference type="RefSeq" id="NP_925475.1">
    <property type="nucleotide sequence ID" value="NC_005125.1"/>
</dbReference>
<dbReference type="RefSeq" id="WP_011142524.1">
    <property type="nucleotide sequence ID" value="NC_005125.1"/>
</dbReference>
<dbReference type="SMR" id="Q7NHK6"/>
<dbReference type="STRING" id="251221.gene:10760029"/>
<dbReference type="EnsemblBacteria" id="BAC90470">
    <property type="protein sequence ID" value="BAC90470"/>
    <property type="gene ID" value="BAC90470"/>
</dbReference>
<dbReference type="KEGG" id="gvi:gsl2529"/>
<dbReference type="PATRIC" id="fig|251221.4.peg.2568"/>
<dbReference type="eggNOG" id="COG0828">
    <property type="taxonomic scope" value="Bacteria"/>
</dbReference>
<dbReference type="HOGENOM" id="CLU_159258_3_1_3"/>
<dbReference type="InParanoid" id="Q7NHK6"/>
<dbReference type="OrthoDB" id="9799244at2"/>
<dbReference type="PhylomeDB" id="Q7NHK6"/>
<dbReference type="Proteomes" id="UP000000557">
    <property type="component" value="Chromosome"/>
</dbReference>
<dbReference type="GO" id="GO:1990904">
    <property type="term" value="C:ribonucleoprotein complex"/>
    <property type="evidence" value="ECO:0007669"/>
    <property type="project" value="UniProtKB-KW"/>
</dbReference>
<dbReference type="GO" id="GO:0005840">
    <property type="term" value="C:ribosome"/>
    <property type="evidence" value="ECO:0007669"/>
    <property type="project" value="UniProtKB-KW"/>
</dbReference>
<dbReference type="GO" id="GO:0003735">
    <property type="term" value="F:structural constituent of ribosome"/>
    <property type="evidence" value="ECO:0007669"/>
    <property type="project" value="InterPro"/>
</dbReference>
<dbReference type="GO" id="GO:0006412">
    <property type="term" value="P:translation"/>
    <property type="evidence" value="ECO:0007669"/>
    <property type="project" value="UniProtKB-UniRule"/>
</dbReference>
<dbReference type="Gene3D" id="1.20.5.1150">
    <property type="entry name" value="Ribosomal protein S8"/>
    <property type="match status" value="1"/>
</dbReference>
<dbReference type="HAMAP" id="MF_00358">
    <property type="entry name" value="Ribosomal_bS21"/>
    <property type="match status" value="1"/>
</dbReference>
<dbReference type="InterPro" id="IPR001911">
    <property type="entry name" value="Ribosomal_bS21"/>
</dbReference>
<dbReference type="InterPro" id="IPR018278">
    <property type="entry name" value="Ribosomal_bS21_CS"/>
</dbReference>
<dbReference type="InterPro" id="IPR038380">
    <property type="entry name" value="Ribosomal_bS21_sf"/>
</dbReference>
<dbReference type="NCBIfam" id="TIGR00030">
    <property type="entry name" value="S21p"/>
    <property type="match status" value="1"/>
</dbReference>
<dbReference type="PANTHER" id="PTHR21109">
    <property type="entry name" value="MITOCHONDRIAL 28S RIBOSOMAL PROTEIN S21"/>
    <property type="match status" value="1"/>
</dbReference>
<dbReference type="PANTHER" id="PTHR21109:SF0">
    <property type="entry name" value="SMALL RIBOSOMAL SUBUNIT PROTEIN BS21M"/>
    <property type="match status" value="1"/>
</dbReference>
<dbReference type="Pfam" id="PF01165">
    <property type="entry name" value="Ribosomal_S21"/>
    <property type="match status" value="1"/>
</dbReference>
<dbReference type="PRINTS" id="PR00976">
    <property type="entry name" value="RIBOSOMALS21"/>
</dbReference>
<dbReference type="PROSITE" id="PS01181">
    <property type="entry name" value="RIBOSOMAL_S21"/>
    <property type="match status" value="1"/>
</dbReference>
<protein>
    <recommendedName>
        <fullName evidence="1">Small ribosomal subunit protein bS21A</fullName>
    </recommendedName>
    <alternativeName>
        <fullName evidence="2">30S ribosomal protein S21 1</fullName>
    </alternativeName>
</protein>
<sequence length="59" mass="7111">MAQVRVGQDESIESALRRFKRTVAKAGILAEAKRHRHFETPIEKRRRKAIARRRRYPRR</sequence>
<gene>
    <name evidence="1" type="primary">rpsU1</name>
    <name evidence="1" type="synonym">rps21-1</name>
    <name type="ordered locus">gsl2529</name>
</gene>
<organism>
    <name type="scientific">Gloeobacter violaceus (strain ATCC 29082 / PCC 7421)</name>
    <dbReference type="NCBI Taxonomy" id="251221"/>
    <lineage>
        <taxon>Bacteria</taxon>
        <taxon>Bacillati</taxon>
        <taxon>Cyanobacteriota</taxon>
        <taxon>Cyanophyceae</taxon>
        <taxon>Gloeobacterales</taxon>
        <taxon>Gloeobacteraceae</taxon>
        <taxon>Gloeobacter</taxon>
    </lineage>
</organism>
<evidence type="ECO:0000255" key="1">
    <source>
        <dbReference type="HAMAP-Rule" id="MF_00358"/>
    </source>
</evidence>
<evidence type="ECO:0000305" key="2"/>
<proteinExistence type="inferred from homology"/>
<reference key="1">
    <citation type="journal article" date="2003" name="DNA Res.">
        <title>Complete genome structure of Gloeobacter violaceus PCC 7421, a cyanobacterium that lacks thylakoids.</title>
        <authorList>
            <person name="Nakamura Y."/>
            <person name="Kaneko T."/>
            <person name="Sato S."/>
            <person name="Mimuro M."/>
            <person name="Miyashita H."/>
            <person name="Tsuchiya T."/>
            <person name="Sasamoto S."/>
            <person name="Watanabe A."/>
            <person name="Kawashima K."/>
            <person name="Kishida Y."/>
            <person name="Kiyokawa C."/>
            <person name="Kohara M."/>
            <person name="Matsumoto M."/>
            <person name="Matsuno A."/>
            <person name="Nakazaki N."/>
            <person name="Shimpo S."/>
            <person name="Takeuchi C."/>
            <person name="Yamada M."/>
            <person name="Tabata S."/>
        </authorList>
    </citation>
    <scope>NUCLEOTIDE SEQUENCE [LARGE SCALE GENOMIC DNA]</scope>
    <source>
        <strain>ATCC 29082 / PCC 7421</strain>
    </source>
</reference>
<comment type="similarity">
    <text evidence="1">Belongs to the bacterial ribosomal protein bS21 family.</text>
</comment>
<name>RS211_GLOVI</name>
<keyword id="KW-1185">Reference proteome</keyword>
<keyword id="KW-0687">Ribonucleoprotein</keyword>
<keyword id="KW-0689">Ribosomal protein</keyword>